<evidence type="ECO:0000250" key="1">
    <source>
        <dbReference type="UniProtKB" id="P68363"/>
    </source>
</evidence>
<evidence type="ECO:0000250" key="2">
    <source>
        <dbReference type="UniProtKB" id="Q13509"/>
    </source>
</evidence>
<evidence type="ECO:0000269" key="3">
    <source>
    </source>
</evidence>
<evidence type="ECO:0000269" key="4">
    <source>
    </source>
</evidence>
<evidence type="ECO:0000305" key="5"/>
<evidence type="ECO:0007829" key="6">
    <source>
        <dbReference type="PDB" id="8YAJ"/>
    </source>
</evidence>
<evidence type="ECO:0007829" key="7">
    <source>
        <dbReference type="PDB" id="8YAL"/>
    </source>
</evidence>
<name>TBB1_CAEEL</name>
<accession>P12456</accession>
<protein>
    <recommendedName>
        <fullName>Tubulin beta-1 chain</fullName>
    </recommendedName>
    <alternativeName>
        <fullName>Beta-1-tubulin</fullName>
    </alternativeName>
</protein>
<dbReference type="EMBL" id="X15242">
    <property type="protein sequence ID" value="CAA33320.1"/>
    <property type="molecule type" value="Genomic_DNA"/>
</dbReference>
<dbReference type="EMBL" id="FO080892">
    <property type="protein sequence ID" value="CCD67558.1"/>
    <property type="molecule type" value="Genomic_DNA"/>
</dbReference>
<dbReference type="PIR" id="S05956">
    <property type="entry name" value="S05956"/>
</dbReference>
<dbReference type="RefSeq" id="NP_509313.1">
    <property type="nucleotide sequence ID" value="NM_076912.5"/>
</dbReference>
<dbReference type="PDB" id="8Y9F">
    <property type="method" value="EM"/>
    <property type="resolution" value="3.30 A"/>
    <property type="chains" value="D/F=1-441"/>
</dbReference>
<dbReference type="PDB" id="8YAJ">
    <property type="method" value="EM"/>
    <property type="resolution" value="3.20 A"/>
    <property type="chains" value="D/F=1-441"/>
</dbReference>
<dbReference type="PDB" id="8YAL">
    <property type="method" value="EM"/>
    <property type="resolution" value="3.10 A"/>
    <property type="chains" value="D/F=1-441"/>
</dbReference>
<dbReference type="PDB" id="8YAR">
    <property type="method" value="EM"/>
    <property type="resolution" value="3.60 A"/>
    <property type="chains" value="D/F=1-441"/>
</dbReference>
<dbReference type="PDBsum" id="8Y9F"/>
<dbReference type="PDBsum" id="8YAJ"/>
<dbReference type="PDBsum" id="8YAL"/>
<dbReference type="PDBsum" id="8YAR"/>
<dbReference type="EMDB" id="EMD-39076"/>
<dbReference type="EMDB" id="EMD-39100"/>
<dbReference type="EMDB" id="EMD-39102"/>
<dbReference type="EMDB" id="EMD-39105"/>
<dbReference type="SMR" id="P12456"/>
<dbReference type="BioGRID" id="45960">
    <property type="interactions" value="9"/>
</dbReference>
<dbReference type="FunCoup" id="P12456">
    <property type="interactions" value="82"/>
</dbReference>
<dbReference type="STRING" id="6239.ZK154.3.1"/>
<dbReference type="PaxDb" id="6239-ZK154.3"/>
<dbReference type="PeptideAtlas" id="P12456"/>
<dbReference type="EnsemblMetazoa" id="ZK154.3.1">
    <property type="protein sequence ID" value="ZK154.3.1"/>
    <property type="gene ID" value="WBGene00003171"/>
</dbReference>
<dbReference type="GeneID" id="181036"/>
<dbReference type="KEGG" id="cel:CELE_ZK154.3"/>
<dbReference type="UCSC" id="ZK154.3">
    <property type="organism name" value="c. elegans"/>
</dbReference>
<dbReference type="AGR" id="WB:WBGene00003171"/>
<dbReference type="CTD" id="181036"/>
<dbReference type="WormBase" id="ZK154.3">
    <property type="protein sequence ID" value="CE15257"/>
    <property type="gene ID" value="WBGene00003171"/>
    <property type="gene designation" value="mec-7"/>
</dbReference>
<dbReference type="eggNOG" id="KOG1375">
    <property type="taxonomic scope" value="Eukaryota"/>
</dbReference>
<dbReference type="GeneTree" id="ENSGT00940000170651"/>
<dbReference type="HOGENOM" id="CLU_015718_1_1_1"/>
<dbReference type="InParanoid" id="P12456"/>
<dbReference type="OMA" id="DQMRSIQ"/>
<dbReference type="OrthoDB" id="6073114at2759"/>
<dbReference type="PhylomeDB" id="P12456"/>
<dbReference type="Reactome" id="R-CEL-5620924">
    <property type="pathway name" value="Intraflagellar transport"/>
</dbReference>
<dbReference type="Reactome" id="R-CEL-6807878">
    <property type="pathway name" value="COPI-mediated anterograde transport"/>
</dbReference>
<dbReference type="Reactome" id="R-CEL-6811434">
    <property type="pathway name" value="COPI-dependent Golgi-to-ER retrograde traffic"/>
</dbReference>
<dbReference type="Reactome" id="R-CEL-6811436">
    <property type="pathway name" value="COPI-independent Golgi-to-ER retrograde traffic"/>
</dbReference>
<dbReference type="Reactome" id="R-CEL-983189">
    <property type="pathway name" value="Kinesins"/>
</dbReference>
<dbReference type="PRO" id="PR:P12456"/>
<dbReference type="Proteomes" id="UP000001940">
    <property type="component" value="Chromosome X"/>
</dbReference>
<dbReference type="Bgee" id="WBGene00003171">
    <property type="expression patterns" value="Expressed in larva and 26 other cell types or tissues"/>
</dbReference>
<dbReference type="GO" id="GO:0005737">
    <property type="term" value="C:cytoplasm"/>
    <property type="evidence" value="ECO:0000318"/>
    <property type="project" value="GO_Central"/>
</dbReference>
<dbReference type="GO" id="GO:0005874">
    <property type="term" value="C:microtubule"/>
    <property type="evidence" value="ECO:0000318"/>
    <property type="project" value="GO_Central"/>
</dbReference>
<dbReference type="GO" id="GO:0043005">
    <property type="term" value="C:neuron projection"/>
    <property type="evidence" value="ECO:0000314"/>
    <property type="project" value="WormBase"/>
</dbReference>
<dbReference type="GO" id="GO:0043025">
    <property type="term" value="C:neuronal cell body"/>
    <property type="evidence" value="ECO:0000314"/>
    <property type="project" value="WormBase"/>
</dbReference>
<dbReference type="GO" id="GO:0005525">
    <property type="term" value="F:GTP binding"/>
    <property type="evidence" value="ECO:0000318"/>
    <property type="project" value="GO_Central"/>
</dbReference>
<dbReference type="GO" id="GO:0003924">
    <property type="term" value="F:GTPase activity"/>
    <property type="evidence" value="ECO:0007669"/>
    <property type="project" value="InterPro"/>
</dbReference>
<dbReference type="GO" id="GO:0046872">
    <property type="term" value="F:metal ion binding"/>
    <property type="evidence" value="ECO:0007669"/>
    <property type="project" value="UniProtKB-KW"/>
</dbReference>
<dbReference type="GO" id="GO:0005200">
    <property type="term" value="F:structural constituent of cytoskeleton"/>
    <property type="evidence" value="ECO:0000318"/>
    <property type="project" value="GO_Central"/>
</dbReference>
<dbReference type="GO" id="GO:0031122">
    <property type="term" value="P:cytoplasmic microtubule organization"/>
    <property type="evidence" value="ECO:0000315"/>
    <property type="project" value="WormBase"/>
</dbReference>
<dbReference type="GO" id="GO:0050974">
    <property type="term" value="P:detection of mechanical stimulus involved in sensory perception"/>
    <property type="evidence" value="ECO:0000315"/>
    <property type="project" value="WormBase"/>
</dbReference>
<dbReference type="GO" id="GO:0050976">
    <property type="term" value="P:detection of mechanical stimulus involved in sensory perception of touch"/>
    <property type="evidence" value="ECO:0000316"/>
    <property type="project" value="UniProtKB"/>
</dbReference>
<dbReference type="GO" id="GO:0007638">
    <property type="term" value="P:mechanosensory behavior"/>
    <property type="evidence" value="ECO:0000315"/>
    <property type="project" value="WormBase"/>
</dbReference>
<dbReference type="GO" id="GO:0000226">
    <property type="term" value="P:microtubule cytoskeleton organization"/>
    <property type="evidence" value="ECO:0000318"/>
    <property type="project" value="GO_Central"/>
</dbReference>
<dbReference type="GO" id="GO:0000278">
    <property type="term" value="P:mitotic cell cycle"/>
    <property type="evidence" value="ECO:0000318"/>
    <property type="project" value="GO_Central"/>
</dbReference>
<dbReference type="GO" id="GO:1905789">
    <property type="term" value="P:positive regulation of detection of mechanical stimulus involved in sensory perception of touch"/>
    <property type="evidence" value="ECO:0000316"/>
    <property type="project" value="UniProtKB"/>
</dbReference>
<dbReference type="GO" id="GO:1905792">
    <property type="term" value="P:positive regulation of mechanosensory behavior"/>
    <property type="evidence" value="ECO:0000316"/>
    <property type="project" value="UniProtKB"/>
</dbReference>
<dbReference type="GO" id="GO:0009612">
    <property type="term" value="P:response to mechanical stimulus"/>
    <property type="evidence" value="ECO:0000315"/>
    <property type="project" value="WormBase"/>
</dbReference>
<dbReference type="CDD" id="cd02187">
    <property type="entry name" value="beta_tubulin"/>
    <property type="match status" value="1"/>
</dbReference>
<dbReference type="FunFam" id="1.10.287.600:FF:000002">
    <property type="entry name" value="Tubulin beta chain"/>
    <property type="match status" value="1"/>
</dbReference>
<dbReference type="FunFam" id="3.30.1330.20:FF:000002">
    <property type="entry name" value="Tubulin beta chain"/>
    <property type="match status" value="1"/>
</dbReference>
<dbReference type="FunFam" id="3.40.50.1440:FF:000003">
    <property type="entry name" value="Tubulin beta chain"/>
    <property type="match status" value="1"/>
</dbReference>
<dbReference type="Gene3D" id="1.10.287.600">
    <property type="entry name" value="Helix hairpin bin"/>
    <property type="match status" value="1"/>
</dbReference>
<dbReference type="Gene3D" id="3.30.1330.20">
    <property type="entry name" value="Tubulin/FtsZ, C-terminal domain"/>
    <property type="match status" value="1"/>
</dbReference>
<dbReference type="Gene3D" id="3.40.50.1440">
    <property type="entry name" value="Tubulin/FtsZ, GTPase domain"/>
    <property type="match status" value="1"/>
</dbReference>
<dbReference type="InterPro" id="IPR013838">
    <property type="entry name" value="Beta-tubulin_BS"/>
</dbReference>
<dbReference type="InterPro" id="IPR002453">
    <property type="entry name" value="Beta_tubulin"/>
</dbReference>
<dbReference type="InterPro" id="IPR008280">
    <property type="entry name" value="Tub_FtsZ_C"/>
</dbReference>
<dbReference type="InterPro" id="IPR000217">
    <property type="entry name" value="Tubulin"/>
</dbReference>
<dbReference type="InterPro" id="IPR037103">
    <property type="entry name" value="Tubulin/FtsZ-like_C"/>
</dbReference>
<dbReference type="InterPro" id="IPR018316">
    <property type="entry name" value="Tubulin/FtsZ_2-layer-sand-dom"/>
</dbReference>
<dbReference type="InterPro" id="IPR036525">
    <property type="entry name" value="Tubulin/FtsZ_GTPase_sf"/>
</dbReference>
<dbReference type="InterPro" id="IPR023123">
    <property type="entry name" value="Tubulin_C"/>
</dbReference>
<dbReference type="InterPro" id="IPR017975">
    <property type="entry name" value="Tubulin_CS"/>
</dbReference>
<dbReference type="InterPro" id="IPR003008">
    <property type="entry name" value="Tubulin_FtsZ_GTPase"/>
</dbReference>
<dbReference type="PANTHER" id="PTHR11588">
    <property type="entry name" value="TUBULIN"/>
    <property type="match status" value="1"/>
</dbReference>
<dbReference type="Pfam" id="PF00091">
    <property type="entry name" value="Tubulin"/>
    <property type="match status" value="1"/>
</dbReference>
<dbReference type="Pfam" id="PF03953">
    <property type="entry name" value="Tubulin_C"/>
    <property type="match status" value="1"/>
</dbReference>
<dbReference type="PRINTS" id="PR01163">
    <property type="entry name" value="BETATUBULIN"/>
</dbReference>
<dbReference type="PRINTS" id="PR01161">
    <property type="entry name" value="TUBULIN"/>
</dbReference>
<dbReference type="SMART" id="SM00864">
    <property type="entry name" value="Tubulin"/>
    <property type="match status" value="1"/>
</dbReference>
<dbReference type="SMART" id="SM00865">
    <property type="entry name" value="Tubulin_C"/>
    <property type="match status" value="1"/>
</dbReference>
<dbReference type="SUPFAM" id="SSF55307">
    <property type="entry name" value="Tubulin C-terminal domain-like"/>
    <property type="match status" value="1"/>
</dbReference>
<dbReference type="SUPFAM" id="SSF52490">
    <property type="entry name" value="Tubulin nucleotide-binding domain-like"/>
    <property type="match status" value="1"/>
</dbReference>
<dbReference type="PROSITE" id="PS00227">
    <property type="entry name" value="TUBULIN"/>
    <property type="match status" value="1"/>
</dbReference>
<dbReference type="PROSITE" id="PS00228">
    <property type="entry name" value="TUBULIN_B_AUTOREG"/>
    <property type="match status" value="1"/>
</dbReference>
<sequence>MREIVHIQAGQCGNQIGSKFWEVISDEHGIDPSGQYVGDSDLQLERINVYYNEAGSNKYVPRAVLVDLEPGTMDSVRSGPFGQLFRPDNYVFGQSGAGNNWAKGHYTEGAELVDNVLDVVRKEAESTDCLQGFQLTHSLGGGTGSGMGTLLISKIREEYPDRIMNTFSVVPSPKVSDTVVEPYNATLSVHQLVENTDSTFCIDNEALYDICFRTLKLTTPTYGDLNHLVSATMSGVTTCLRFPGQLNADLRKLAVNMVPFPRLHFFMPGFAPLTSRSNQQYRAITVPELTQQCFDAKNMMAACDPRHGRYLTAAAIFRGRMSMKEVDEQMLNIQNKNSSYFVDWIPNNVKTAVCDIPPRGLKMSATFIGNSTAIQELFKRISEQFTAMFRRKAFLHWYTGEGMDEMEFTEAESNMNDLVSEYQQYQEAAADEDAAEAFDGE</sequence>
<gene>
    <name type="primary">mec-7</name>
    <name type="ORF">ZK154.3</name>
</gene>
<proteinExistence type="evidence at protein level"/>
<keyword id="KW-0002">3D-structure</keyword>
<keyword id="KW-0963">Cytoplasm</keyword>
<keyword id="KW-0206">Cytoskeleton</keyword>
<keyword id="KW-0342">GTP-binding</keyword>
<keyword id="KW-0460">Magnesium</keyword>
<keyword id="KW-0479">Metal-binding</keyword>
<keyword id="KW-0493">Microtubule</keyword>
<keyword id="KW-0547">Nucleotide-binding</keyword>
<keyword id="KW-1185">Reference proteome</keyword>
<comment type="function">
    <text evidence="4 5">TTubulin is the major constituent of microtubules, a cylinder consisting of laterally associated linear protofilaments composed of alpha- and beta-tubulin heterodimers. Microtubules grow by the addition of GTP-tubulin dimers to the microtubule end, where a stabilizing cap forms. Below the cap, tubulin dimers are in GDP-bound state, owing to GTPase activity of alpha-tubulin. Plays a role in mechanosensory transduction (touch sensitivity) (PubMed:19652181).</text>
</comment>
<comment type="function">
    <text>Mec-7 beta-tubulin is required for the production of 15-protofilament microtubules.</text>
</comment>
<comment type="cofactor">
    <cofactor evidence="1">
        <name>Mg(2+)</name>
        <dbReference type="ChEBI" id="CHEBI:18420"/>
    </cofactor>
</comment>
<comment type="subunit">
    <text>Dimer of alpha and beta chains. A typical microtubule is a hollow water-filled tube with an outer diameter of 25 nm and an inner diameter of 15 nM. Alpha-beta heterodimers associate head-to-tail to form protofilaments running lengthwise along the microtubule wall with the beta-tubulin subunit facing the microtubule plus end conferring a structural polarity. Microtubules usually have 13 protofilaments but different protofilament numbers can be found in some organisms and specialized cells.</text>
</comment>
<comment type="subcellular location">
    <subcellularLocation>
        <location>Cytoplasm</location>
        <location>Cytoskeleton</location>
    </subcellularLocation>
</comment>
<comment type="tissue specificity">
    <text evidence="3">Expressed primarily in touch receptor neurons.</text>
</comment>
<comment type="disruption phenotype">
    <text evidence="4">Defective touch receptor neuron synaptic transmission with reduced levels of rab-3 at synapses, conferring touch insensitivity. Irregular touch receptor neuron shape. The heterozygous mutant, but not the null mutant, rescues the touch sensitivity defect in the mec-15 single mutant.</text>
</comment>
<comment type="similarity">
    <text evidence="5">Belongs to the tubulin family.</text>
</comment>
<feature type="chain" id="PRO_0000048286" description="Tubulin beta-1 chain">
    <location>
        <begin position="1"/>
        <end position="441"/>
    </location>
</feature>
<feature type="binding site" evidence="2">
    <location>
        <position position="11"/>
    </location>
    <ligand>
        <name>GTP</name>
        <dbReference type="ChEBI" id="CHEBI:37565"/>
    </ligand>
</feature>
<feature type="binding site" evidence="1">
    <location>
        <position position="69"/>
    </location>
    <ligand>
        <name>GTP</name>
        <dbReference type="ChEBI" id="CHEBI:37565"/>
    </ligand>
</feature>
<feature type="binding site" evidence="1">
    <location>
        <position position="69"/>
    </location>
    <ligand>
        <name>Mg(2+)</name>
        <dbReference type="ChEBI" id="CHEBI:18420"/>
    </ligand>
</feature>
<feature type="binding site" evidence="2">
    <location>
        <position position="138"/>
    </location>
    <ligand>
        <name>GTP</name>
        <dbReference type="ChEBI" id="CHEBI:37565"/>
    </ligand>
</feature>
<feature type="binding site" evidence="2">
    <location>
        <position position="142"/>
    </location>
    <ligand>
        <name>GTP</name>
        <dbReference type="ChEBI" id="CHEBI:37565"/>
    </ligand>
</feature>
<feature type="binding site" evidence="2">
    <location>
        <position position="143"/>
    </location>
    <ligand>
        <name>GTP</name>
        <dbReference type="ChEBI" id="CHEBI:37565"/>
    </ligand>
</feature>
<feature type="binding site" evidence="2">
    <location>
        <position position="144"/>
    </location>
    <ligand>
        <name>GTP</name>
        <dbReference type="ChEBI" id="CHEBI:37565"/>
    </ligand>
</feature>
<feature type="binding site" evidence="2">
    <location>
        <position position="204"/>
    </location>
    <ligand>
        <name>GTP</name>
        <dbReference type="ChEBI" id="CHEBI:37565"/>
    </ligand>
</feature>
<feature type="binding site" evidence="2">
    <location>
        <position position="226"/>
    </location>
    <ligand>
        <name>GTP</name>
        <dbReference type="ChEBI" id="CHEBI:37565"/>
    </ligand>
</feature>
<feature type="strand" evidence="7">
    <location>
        <begin position="3"/>
        <end position="9"/>
    </location>
</feature>
<feature type="helix" evidence="7">
    <location>
        <begin position="10"/>
        <end position="28"/>
    </location>
</feature>
<feature type="strand" evidence="7">
    <location>
        <begin position="34"/>
        <end position="36"/>
    </location>
</feature>
<feature type="helix" evidence="7">
    <location>
        <begin position="41"/>
        <end position="45"/>
    </location>
</feature>
<feature type="helix" evidence="7">
    <location>
        <begin position="47"/>
        <end position="49"/>
    </location>
</feature>
<feature type="strand" evidence="6">
    <location>
        <begin position="51"/>
        <end position="53"/>
    </location>
</feature>
<feature type="strand" evidence="7">
    <location>
        <begin position="55"/>
        <end position="58"/>
    </location>
</feature>
<feature type="strand" evidence="7">
    <location>
        <begin position="63"/>
        <end position="68"/>
    </location>
</feature>
<feature type="helix" evidence="7">
    <location>
        <begin position="70"/>
        <end position="77"/>
    </location>
</feature>
<feature type="helix" evidence="7">
    <location>
        <begin position="82"/>
        <end position="84"/>
    </location>
</feature>
<feature type="helix" evidence="7">
    <location>
        <begin position="87"/>
        <end position="89"/>
    </location>
</feature>
<feature type="strand" evidence="7">
    <location>
        <begin position="90"/>
        <end position="92"/>
    </location>
</feature>
<feature type="helix" evidence="7">
    <location>
        <begin position="101"/>
        <end position="106"/>
    </location>
</feature>
<feature type="helix" evidence="7">
    <location>
        <begin position="108"/>
        <end position="124"/>
    </location>
</feature>
<feature type="strand" evidence="7">
    <location>
        <begin position="127"/>
        <end position="138"/>
    </location>
</feature>
<feature type="helix" evidence="7">
    <location>
        <begin position="143"/>
        <end position="158"/>
    </location>
</feature>
<feature type="strand" evidence="7">
    <location>
        <begin position="160"/>
        <end position="170"/>
    </location>
</feature>
<feature type="helix" evidence="6">
    <location>
        <begin position="173"/>
        <end position="175"/>
    </location>
</feature>
<feature type="helix" evidence="7">
    <location>
        <begin position="181"/>
        <end position="194"/>
    </location>
</feature>
<feature type="strand" evidence="7">
    <location>
        <begin position="197"/>
        <end position="200"/>
    </location>
</feature>
<feature type="helix" evidence="7">
    <location>
        <begin position="204"/>
        <end position="213"/>
    </location>
</feature>
<feature type="helix" evidence="7">
    <location>
        <begin position="222"/>
        <end position="236"/>
    </location>
</feature>
<feature type="helix" evidence="7">
    <location>
        <begin position="238"/>
        <end position="240"/>
    </location>
</feature>
<feature type="strand" evidence="7">
    <location>
        <begin position="244"/>
        <end position="246"/>
    </location>
</feature>
<feature type="helix" evidence="7">
    <location>
        <begin position="250"/>
        <end position="257"/>
    </location>
</feature>
<feature type="strand" evidence="7">
    <location>
        <begin position="265"/>
        <end position="267"/>
    </location>
</feature>
<feature type="strand" evidence="6">
    <location>
        <begin position="270"/>
        <end position="272"/>
    </location>
</feature>
<feature type="turn" evidence="7">
    <location>
        <begin position="277"/>
        <end position="281"/>
    </location>
</feature>
<feature type="helix" evidence="7">
    <location>
        <begin position="286"/>
        <end position="293"/>
    </location>
</feature>
<feature type="strand" evidence="7">
    <location>
        <begin position="296"/>
        <end position="298"/>
    </location>
</feature>
<feature type="strand" evidence="7">
    <location>
        <begin position="300"/>
        <end position="303"/>
    </location>
</feature>
<feature type="helix" evidence="7">
    <location>
        <begin position="305"/>
        <end position="307"/>
    </location>
</feature>
<feature type="strand" evidence="7">
    <location>
        <begin position="310"/>
        <end position="320"/>
    </location>
</feature>
<feature type="helix" evidence="7">
    <location>
        <begin position="323"/>
        <end position="336"/>
    </location>
</feature>
<feature type="helix" evidence="7">
    <location>
        <begin position="338"/>
        <end position="340"/>
    </location>
</feature>
<feature type="strand" evidence="6">
    <location>
        <begin position="343"/>
        <end position="346"/>
    </location>
</feature>
<feature type="strand" evidence="7">
    <location>
        <begin position="349"/>
        <end position="355"/>
    </location>
</feature>
<feature type="strand" evidence="7">
    <location>
        <begin position="364"/>
        <end position="371"/>
    </location>
</feature>
<feature type="helix" evidence="7">
    <location>
        <begin position="372"/>
        <end position="374"/>
    </location>
</feature>
<feature type="helix" evidence="7">
    <location>
        <begin position="375"/>
        <end position="389"/>
    </location>
</feature>
<feature type="turn" evidence="7">
    <location>
        <begin position="390"/>
        <end position="392"/>
    </location>
</feature>
<feature type="helix" evidence="7">
    <location>
        <begin position="395"/>
        <end position="399"/>
    </location>
</feature>
<feature type="turn" evidence="7">
    <location>
        <begin position="400"/>
        <end position="402"/>
    </location>
</feature>
<feature type="helix" evidence="7">
    <location>
        <begin position="405"/>
        <end position="424"/>
    </location>
</feature>
<reference key="1">
    <citation type="journal article" date="1989" name="Genes Dev.">
        <title>mec-7 is a beta-tubulin gene required for the production of 15-protofilament microtubules in Caenorhabditis elegans.</title>
        <authorList>
            <person name="Savage C."/>
            <person name="Hamelin M."/>
            <person name="Culotti J.G."/>
            <person name="Coulson A."/>
            <person name="Albertson D.G."/>
            <person name="Chalfie M."/>
        </authorList>
    </citation>
    <scope>NUCLEOTIDE SEQUENCE [GENOMIC DNA]</scope>
</reference>
<reference key="2">
    <citation type="journal article" date="1998" name="Science">
        <title>Genome sequence of the nematode C. elegans: a platform for investigating biology.</title>
        <authorList>
            <consortium name="The C. elegans sequencing consortium"/>
        </authorList>
    </citation>
    <scope>NUCLEOTIDE SEQUENCE [LARGE SCALE GENOMIC DNA]</scope>
    <source>
        <strain>Bristol N2</strain>
    </source>
</reference>
<reference key="3">
    <citation type="journal article" date="1992" name="EMBO J.">
        <title>The mec-7 beta-tubulin gene of Caenorhabditis elegans is expressed primarily in the touch receptor neurons.</title>
        <authorList>
            <person name="Hamelin M."/>
            <person name="Scott I.M."/>
            <person name="Way J.C."/>
            <person name="Culotti J.G."/>
        </authorList>
    </citation>
    <scope>TISSUE SPECIFICITY</scope>
</reference>
<reference key="4">
    <citation type="journal article" date="2009" name="Genetics">
        <title>mec-15 encodes an F-box protein required for touch receptor neuron mechanosensation, synapse formation and development.</title>
        <authorList>
            <person name="Bounoutas A."/>
            <person name="Zheng Q."/>
            <person name="Nonet M.L."/>
            <person name="Chalfie M."/>
        </authorList>
    </citation>
    <scope>FUNCTION</scope>
    <scope>DISRUPTION PHENOTYPE</scope>
</reference>
<organism>
    <name type="scientific">Caenorhabditis elegans</name>
    <dbReference type="NCBI Taxonomy" id="6239"/>
    <lineage>
        <taxon>Eukaryota</taxon>
        <taxon>Metazoa</taxon>
        <taxon>Ecdysozoa</taxon>
        <taxon>Nematoda</taxon>
        <taxon>Chromadorea</taxon>
        <taxon>Rhabditida</taxon>
        <taxon>Rhabditina</taxon>
        <taxon>Rhabditomorpha</taxon>
        <taxon>Rhabditoidea</taxon>
        <taxon>Rhabditidae</taxon>
        <taxon>Peloderinae</taxon>
        <taxon>Caenorhabditis</taxon>
    </lineage>
</organism>